<feature type="chain" id="PRO_0000181951" description="Ribosome maturation factor RimP">
    <location>
        <begin position="1"/>
        <end position="151"/>
    </location>
</feature>
<evidence type="ECO:0000255" key="1">
    <source>
        <dbReference type="HAMAP-Rule" id="MF_01077"/>
    </source>
</evidence>
<organism>
    <name type="scientific">Vibrio vulnificus (strain CMCP6)</name>
    <dbReference type="NCBI Taxonomy" id="216895"/>
    <lineage>
        <taxon>Bacteria</taxon>
        <taxon>Pseudomonadati</taxon>
        <taxon>Pseudomonadota</taxon>
        <taxon>Gammaproteobacteria</taxon>
        <taxon>Vibrionales</taxon>
        <taxon>Vibrionaceae</taxon>
        <taxon>Vibrio</taxon>
    </lineage>
</organism>
<dbReference type="EMBL" id="AE016795">
    <property type="protein sequence ID" value="AAO10110.1"/>
    <property type="molecule type" value="Genomic_DNA"/>
</dbReference>
<dbReference type="RefSeq" id="WP_011079614.1">
    <property type="nucleotide sequence ID" value="NC_004459.3"/>
</dbReference>
<dbReference type="SMR" id="Q8DBW2"/>
<dbReference type="GeneID" id="93895947"/>
<dbReference type="KEGG" id="vvu:VV1_1694"/>
<dbReference type="HOGENOM" id="CLU_070525_1_1_6"/>
<dbReference type="Proteomes" id="UP000002275">
    <property type="component" value="Chromosome 1"/>
</dbReference>
<dbReference type="GO" id="GO:0005829">
    <property type="term" value="C:cytosol"/>
    <property type="evidence" value="ECO:0007669"/>
    <property type="project" value="TreeGrafter"/>
</dbReference>
<dbReference type="GO" id="GO:0000028">
    <property type="term" value="P:ribosomal small subunit assembly"/>
    <property type="evidence" value="ECO:0007669"/>
    <property type="project" value="TreeGrafter"/>
</dbReference>
<dbReference type="GO" id="GO:0006412">
    <property type="term" value="P:translation"/>
    <property type="evidence" value="ECO:0007669"/>
    <property type="project" value="TreeGrafter"/>
</dbReference>
<dbReference type="CDD" id="cd01734">
    <property type="entry name" value="YlxS_C"/>
    <property type="match status" value="1"/>
</dbReference>
<dbReference type="FunFam" id="2.30.30.180:FF:000001">
    <property type="entry name" value="Ribosome maturation factor RimP"/>
    <property type="match status" value="1"/>
</dbReference>
<dbReference type="FunFam" id="3.30.300.70:FF:000001">
    <property type="entry name" value="Ribosome maturation factor RimP"/>
    <property type="match status" value="1"/>
</dbReference>
<dbReference type="Gene3D" id="2.30.30.180">
    <property type="entry name" value="Ribosome maturation factor RimP, C-terminal domain"/>
    <property type="match status" value="1"/>
</dbReference>
<dbReference type="Gene3D" id="3.30.300.70">
    <property type="entry name" value="RimP-like superfamily, N-terminal"/>
    <property type="match status" value="1"/>
</dbReference>
<dbReference type="HAMAP" id="MF_01077">
    <property type="entry name" value="RimP"/>
    <property type="match status" value="1"/>
</dbReference>
<dbReference type="InterPro" id="IPR003728">
    <property type="entry name" value="Ribosome_maturation_RimP"/>
</dbReference>
<dbReference type="InterPro" id="IPR028998">
    <property type="entry name" value="RimP_C"/>
</dbReference>
<dbReference type="InterPro" id="IPR036847">
    <property type="entry name" value="RimP_C_sf"/>
</dbReference>
<dbReference type="InterPro" id="IPR028989">
    <property type="entry name" value="RimP_N"/>
</dbReference>
<dbReference type="InterPro" id="IPR035956">
    <property type="entry name" value="RimP_N_sf"/>
</dbReference>
<dbReference type="NCBIfam" id="NF000927">
    <property type="entry name" value="PRK00092.1-1"/>
    <property type="match status" value="1"/>
</dbReference>
<dbReference type="PANTHER" id="PTHR33867">
    <property type="entry name" value="RIBOSOME MATURATION FACTOR RIMP"/>
    <property type="match status" value="1"/>
</dbReference>
<dbReference type="PANTHER" id="PTHR33867:SF1">
    <property type="entry name" value="RIBOSOME MATURATION FACTOR RIMP"/>
    <property type="match status" value="1"/>
</dbReference>
<dbReference type="Pfam" id="PF17384">
    <property type="entry name" value="DUF150_C"/>
    <property type="match status" value="1"/>
</dbReference>
<dbReference type="Pfam" id="PF02576">
    <property type="entry name" value="RimP_N"/>
    <property type="match status" value="1"/>
</dbReference>
<dbReference type="SUPFAM" id="SSF74942">
    <property type="entry name" value="YhbC-like, C-terminal domain"/>
    <property type="match status" value="1"/>
</dbReference>
<dbReference type="SUPFAM" id="SSF75420">
    <property type="entry name" value="YhbC-like, N-terminal domain"/>
    <property type="match status" value="1"/>
</dbReference>
<proteinExistence type="inferred from homology"/>
<sequence length="151" mass="16684">MTGLERQLTEMLESAVVASGYELVGLEFIRAGEHSTLRIYIDHENGITVEDCAEVSHQVSAVLDVEDPISVAYSLEVSSPGLDRPLFKPAHYEQFIGQEVNVVLKMAVANRRKWKGEIHSVDGEAITLTVDGQQEEFALSNISKANLIPKF</sequence>
<gene>
    <name evidence="1" type="primary">rimP</name>
    <name type="ordered locus">VV1_1694</name>
</gene>
<name>RIMP_VIBVU</name>
<protein>
    <recommendedName>
        <fullName evidence="1">Ribosome maturation factor RimP</fullName>
    </recommendedName>
</protein>
<keyword id="KW-0963">Cytoplasm</keyword>
<keyword id="KW-0690">Ribosome biogenesis</keyword>
<comment type="function">
    <text evidence="1">Required for maturation of 30S ribosomal subunits.</text>
</comment>
<comment type="subcellular location">
    <subcellularLocation>
        <location evidence="1">Cytoplasm</location>
    </subcellularLocation>
</comment>
<comment type="similarity">
    <text evidence="1">Belongs to the RimP family.</text>
</comment>
<reference key="1">
    <citation type="submission" date="2002-12" db="EMBL/GenBank/DDBJ databases">
        <title>Complete genome sequence of Vibrio vulnificus CMCP6.</title>
        <authorList>
            <person name="Rhee J.H."/>
            <person name="Kim S.Y."/>
            <person name="Chung S.S."/>
            <person name="Kim J.J."/>
            <person name="Moon Y.H."/>
            <person name="Jeong H."/>
            <person name="Choy H.E."/>
        </authorList>
    </citation>
    <scope>NUCLEOTIDE SEQUENCE [LARGE SCALE GENOMIC DNA]</scope>
    <source>
        <strain>CMCP6</strain>
    </source>
</reference>
<accession>Q8DBW2</accession>